<proteinExistence type="inferred from homology"/>
<accession>Q1LI52</accession>
<feature type="chain" id="PRO_0000265282" description="Large ribosomal subunit protein uL6">
    <location>
        <begin position="1"/>
        <end position="177"/>
    </location>
</feature>
<protein>
    <recommendedName>
        <fullName evidence="1">Large ribosomal subunit protein uL6</fullName>
    </recommendedName>
    <alternativeName>
        <fullName evidence="2">50S ribosomal protein L6</fullName>
    </alternativeName>
</protein>
<comment type="function">
    <text evidence="1">This protein binds to the 23S rRNA, and is important in its secondary structure. It is located near the subunit interface in the base of the L7/L12 stalk, and near the tRNA binding site of the peptidyltransferase center.</text>
</comment>
<comment type="subunit">
    <text evidence="1">Part of the 50S ribosomal subunit.</text>
</comment>
<comment type="similarity">
    <text evidence="1">Belongs to the universal ribosomal protein uL6 family.</text>
</comment>
<gene>
    <name evidence="1" type="primary">rplF</name>
    <name type="ordered locus">Rmet_3302</name>
</gene>
<keyword id="KW-1185">Reference proteome</keyword>
<keyword id="KW-0687">Ribonucleoprotein</keyword>
<keyword id="KW-0689">Ribosomal protein</keyword>
<keyword id="KW-0694">RNA-binding</keyword>
<keyword id="KW-0699">rRNA-binding</keyword>
<evidence type="ECO:0000255" key="1">
    <source>
        <dbReference type="HAMAP-Rule" id="MF_01365"/>
    </source>
</evidence>
<evidence type="ECO:0000305" key="2"/>
<reference key="1">
    <citation type="journal article" date="2010" name="PLoS ONE">
        <title>The complete genome sequence of Cupriavidus metallidurans strain CH34, a master survivalist in harsh and anthropogenic environments.</title>
        <authorList>
            <person name="Janssen P.J."/>
            <person name="Van Houdt R."/>
            <person name="Moors H."/>
            <person name="Monsieurs P."/>
            <person name="Morin N."/>
            <person name="Michaux A."/>
            <person name="Benotmane M.A."/>
            <person name="Leys N."/>
            <person name="Vallaeys T."/>
            <person name="Lapidus A."/>
            <person name="Monchy S."/>
            <person name="Medigue C."/>
            <person name="Taghavi S."/>
            <person name="McCorkle S."/>
            <person name="Dunn J."/>
            <person name="van der Lelie D."/>
            <person name="Mergeay M."/>
        </authorList>
    </citation>
    <scope>NUCLEOTIDE SEQUENCE [LARGE SCALE GENOMIC DNA]</scope>
    <source>
        <strain>ATCC 43123 / DSM 2839 / NBRC 102507 / CH34</strain>
    </source>
</reference>
<dbReference type="EMBL" id="CP000352">
    <property type="protein sequence ID" value="ABF10174.1"/>
    <property type="molecule type" value="Genomic_DNA"/>
</dbReference>
<dbReference type="RefSeq" id="WP_011517766.1">
    <property type="nucleotide sequence ID" value="NC_007973.1"/>
</dbReference>
<dbReference type="SMR" id="Q1LI52"/>
<dbReference type="STRING" id="266264.Rmet_3302"/>
<dbReference type="GeneID" id="60826615"/>
<dbReference type="KEGG" id="rme:Rmet_3302"/>
<dbReference type="eggNOG" id="COG0097">
    <property type="taxonomic scope" value="Bacteria"/>
</dbReference>
<dbReference type="HOGENOM" id="CLU_065464_1_2_4"/>
<dbReference type="Proteomes" id="UP000002429">
    <property type="component" value="Chromosome"/>
</dbReference>
<dbReference type="GO" id="GO:0022625">
    <property type="term" value="C:cytosolic large ribosomal subunit"/>
    <property type="evidence" value="ECO:0007669"/>
    <property type="project" value="TreeGrafter"/>
</dbReference>
<dbReference type="GO" id="GO:0019843">
    <property type="term" value="F:rRNA binding"/>
    <property type="evidence" value="ECO:0007669"/>
    <property type="project" value="UniProtKB-UniRule"/>
</dbReference>
<dbReference type="GO" id="GO:0003735">
    <property type="term" value="F:structural constituent of ribosome"/>
    <property type="evidence" value="ECO:0007669"/>
    <property type="project" value="InterPro"/>
</dbReference>
<dbReference type="GO" id="GO:0002181">
    <property type="term" value="P:cytoplasmic translation"/>
    <property type="evidence" value="ECO:0007669"/>
    <property type="project" value="TreeGrafter"/>
</dbReference>
<dbReference type="FunFam" id="3.90.930.12:FF:000001">
    <property type="entry name" value="50S ribosomal protein L6"/>
    <property type="match status" value="1"/>
</dbReference>
<dbReference type="FunFam" id="3.90.930.12:FF:000002">
    <property type="entry name" value="50S ribosomal protein L6"/>
    <property type="match status" value="1"/>
</dbReference>
<dbReference type="Gene3D" id="3.90.930.12">
    <property type="entry name" value="Ribosomal protein L6, alpha-beta domain"/>
    <property type="match status" value="2"/>
</dbReference>
<dbReference type="HAMAP" id="MF_01365_B">
    <property type="entry name" value="Ribosomal_uL6_B"/>
    <property type="match status" value="1"/>
</dbReference>
<dbReference type="InterPro" id="IPR000702">
    <property type="entry name" value="Ribosomal_uL6-like"/>
</dbReference>
<dbReference type="InterPro" id="IPR036789">
    <property type="entry name" value="Ribosomal_uL6-like_a/b-dom_sf"/>
</dbReference>
<dbReference type="InterPro" id="IPR020040">
    <property type="entry name" value="Ribosomal_uL6_a/b-dom"/>
</dbReference>
<dbReference type="InterPro" id="IPR019906">
    <property type="entry name" value="Ribosomal_uL6_bac-type"/>
</dbReference>
<dbReference type="InterPro" id="IPR002358">
    <property type="entry name" value="Ribosomal_uL6_CS"/>
</dbReference>
<dbReference type="NCBIfam" id="TIGR03654">
    <property type="entry name" value="L6_bact"/>
    <property type="match status" value="1"/>
</dbReference>
<dbReference type="PANTHER" id="PTHR11655">
    <property type="entry name" value="60S/50S RIBOSOMAL PROTEIN L6/L9"/>
    <property type="match status" value="1"/>
</dbReference>
<dbReference type="PANTHER" id="PTHR11655:SF14">
    <property type="entry name" value="LARGE RIBOSOMAL SUBUNIT PROTEIN UL6M"/>
    <property type="match status" value="1"/>
</dbReference>
<dbReference type="Pfam" id="PF00347">
    <property type="entry name" value="Ribosomal_L6"/>
    <property type="match status" value="2"/>
</dbReference>
<dbReference type="PIRSF" id="PIRSF002162">
    <property type="entry name" value="Ribosomal_L6"/>
    <property type="match status" value="1"/>
</dbReference>
<dbReference type="PRINTS" id="PR00059">
    <property type="entry name" value="RIBOSOMALL6"/>
</dbReference>
<dbReference type="SUPFAM" id="SSF56053">
    <property type="entry name" value="Ribosomal protein L6"/>
    <property type="match status" value="2"/>
</dbReference>
<dbReference type="PROSITE" id="PS00525">
    <property type="entry name" value="RIBOSOMAL_L6_1"/>
    <property type="match status" value="1"/>
</dbReference>
<sequence length="177" mass="18908">MSRVGKAPIALPKGAEVNVAAGVLSVKGPLGTLSQPIHSLVKVNVAEGTLTFEPADESREANALQGTMRALAANMVKGVTTGFERKLQLVGVGYRAQLQGAALKLQLGFSHDVIHEMPEGVKAETPTQTEIIIKGADKQKVGQVAAEVRAYRPPEPYKGKGVRYADERVILKETKKK</sequence>
<name>RL6_CUPMC</name>
<organism>
    <name type="scientific">Cupriavidus metallidurans (strain ATCC 43123 / DSM 2839 / NBRC 102507 / CH34)</name>
    <name type="common">Ralstonia metallidurans</name>
    <dbReference type="NCBI Taxonomy" id="266264"/>
    <lineage>
        <taxon>Bacteria</taxon>
        <taxon>Pseudomonadati</taxon>
        <taxon>Pseudomonadota</taxon>
        <taxon>Betaproteobacteria</taxon>
        <taxon>Burkholderiales</taxon>
        <taxon>Burkholderiaceae</taxon>
        <taxon>Cupriavidus</taxon>
    </lineage>
</organism>